<protein>
    <recommendedName>
        <fullName evidence="1">Energy-coupling factor transporter ATP-binding protein EcfA1</fullName>
        <shortName evidence="1">ECF transporter A component EcfA1</shortName>
        <ecNumber evidence="1">7.-.-.-</ecNumber>
    </recommendedName>
</protein>
<keyword id="KW-0067">ATP-binding</keyword>
<keyword id="KW-1003">Cell membrane</keyword>
<keyword id="KW-0472">Membrane</keyword>
<keyword id="KW-0547">Nucleotide-binding</keyword>
<keyword id="KW-1278">Translocase</keyword>
<keyword id="KW-0813">Transport</keyword>
<feature type="chain" id="PRO_0000287999" description="Energy-coupling factor transporter ATP-binding protein EcfA1">
    <location>
        <begin position="1"/>
        <end position="279"/>
    </location>
</feature>
<feature type="domain" description="ABC transporter" evidence="1">
    <location>
        <begin position="5"/>
        <end position="240"/>
    </location>
</feature>
<feature type="binding site" evidence="1">
    <location>
        <begin position="40"/>
        <end position="47"/>
    </location>
    <ligand>
        <name>ATP</name>
        <dbReference type="ChEBI" id="CHEBI:30616"/>
    </ligand>
</feature>
<comment type="function">
    <text evidence="1">ATP-binding (A) component of a common energy-coupling factor (ECF) ABC-transporter complex. Unlike classic ABC transporters this ECF transporter provides the energy necessary to transport a number of different substrates.</text>
</comment>
<comment type="subunit">
    <text evidence="1">Forms a stable energy-coupling factor (ECF) transporter complex composed of 2 membrane-embedded substrate-binding proteins (S component), 2 ATP-binding proteins (A component) and 2 transmembrane proteins (T component).</text>
</comment>
<comment type="subcellular location">
    <subcellularLocation>
        <location evidence="1">Cell membrane</location>
        <topology evidence="1">Peripheral membrane protein</topology>
    </subcellularLocation>
</comment>
<comment type="similarity">
    <text evidence="1">Belongs to the ABC transporter superfamily. Energy-coupling factor EcfA family.</text>
</comment>
<comment type="sequence caution" evidence="2">
    <conflict type="erroneous initiation">
        <sequence resource="EMBL-CDS" id="ABF35030"/>
    </conflict>
    <text>Extended N-terminus.</text>
</comment>
<sequence>MSAIIELKKVTFNYHKDQEKPTLDGVSFHVKQGEWLSIIGHNGSGKSTTIRLIDGLLEPESGSIIVDGDLLTITNVWEIRHKIGMVFQNPDNQFVGATVEDDVAFGLENKGIAHEDIKERVNHALELVGMQNFKEKEPARLSGGQKQRVAIAGAVAMKPKIIILDEATSMLDPKGRLELIKTIKNIRDDYQLTVISITHDLDEVALSDRVLVMKDGQVESTSTPEQLFARGDELLQLGLDIPFTTSVVQMLQEEGYPIDYGYLTEKELENQLCQLISKM</sequence>
<proteinExistence type="inferred from homology"/>
<accession>Q1JEC8</accession>
<organism>
    <name type="scientific">Streptococcus pyogenes serotype M2 (strain MGAS10270)</name>
    <dbReference type="NCBI Taxonomy" id="370552"/>
    <lineage>
        <taxon>Bacteria</taxon>
        <taxon>Bacillati</taxon>
        <taxon>Bacillota</taxon>
        <taxon>Bacilli</taxon>
        <taxon>Lactobacillales</taxon>
        <taxon>Streptococcaceae</taxon>
        <taxon>Streptococcus</taxon>
    </lineage>
</organism>
<name>ECFA1_STRPD</name>
<reference key="1">
    <citation type="journal article" date="2006" name="Proc. Natl. Acad. Sci. U.S.A.">
        <title>Molecular genetic anatomy of inter- and intraserotype variation in the human bacterial pathogen group A Streptococcus.</title>
        <authorList>
            <person name="Beres S.B."/>
            <person name="Richter E.W."/>
            <person name="Nagiec M.J."/>
            <person name="Sumby P."/>
            <person name="Porcella S.F."/>
            <person name="DeLeo F.R."/>
            <person name="Musser J.M."/>
        </authorList>
    </citation>
    <scope>NUCLEOTIDE SEQUENCE [LARGE SCALE GENOMIC DNA]</scope>
    <source>
        <strain>MGAS10270</strain>
    </source>
</reference>
<evidence type="ECO:0000255" key="1">
    <source>
        <dbReference type="HAMAP-Rule" id="MF_01710"/>
    </source>
</evidence>
<evidence type="ECO:0000305" key="2"/>
<dbReference type="EC" id="7.-.-.-" evidence="1"/>
<dbReference type="EMBL" id="CP000260">
    <property type="protein sequence ID" value="ABF35030.1"/>
    <property type="status" value="ALT_INIT"/>
    <property type="molecule type" value="Genomic_DNA"/>
</dbReference>
<dbReference type="RefSeq" id="WP_002992388.1">
    <property type="nucleotide sequence ID" value="NZ_CVUH01000011.1"/>
</dbReference>
<dbReference type="SMR" id="Q1JEC8"/>
<dbReference type="KEGG" id="sph:MGAS10270_Spy1965"/>
<dbReference type="HOGENOM" id="CLU_000604_1_22_9"/>
<dbReference type="Proteomes" id="UP000002436">
    <property type="component" value="Chromosome"/>
</dbReference>
<dbReference type="GO" id="GO:0043190">
    <property type="term" value="C:ATP-binding cassette (ABC) transporter complex"/>
    <property type="evidence" value="ECO:0007669"/>
    <property type="project" value="TreeGrafter"/>
</dbReference>
<dbReference type="GO" id="GO:0005524">
    <property type="term" value="F:ATP binding"/>
    <property type="evidence" value="ECO:0007669"/>
    <property type="project" value="UniProtKB-KW"/>
</dbReference>
<dbReference type="GO" id="GO:0016887">
    <property type="term" value="F:ATP hydrolysis activity"/>
    <property type="evidence" value="ECO:0007669"/>
    <property type="project" value="InterPro"/>
</dbReference>
<dbReference type="GO" id="GO:0042626">
    <property type="term" value="F:ATPase-coupled transmembrane transporter activity"/>
    <property type="evidence" value="ECO:0007669"/>
    <property type="project" value="TreeGrafter"/>
</dbReference>
<dbReference type="CDD" id="cd03225">
    <property type="entry name" value="ABC_cobalt_CbiO_domain1"/>
    <property type="match status" value="1"/>
</dbReference>
<dbReference type="FunFam" id="3.40.50.300:FF:000224">
    <property type="entry name" value="Energy-coupling factor transporter ATP-binding protein EcfA"/>
    <property type="match status" value="1"/>
</dbReference>
<dbReference type="Gene3D" id="3.40.50.300">
    <property type="entry name" value="P-loop containing nucleotide triphosphate hydrolases"/>
    <property type="match status" value="1"/>
</dbReference>
<dbReference type="InterPro" id="IPR003593">
    <property type="entry name" value="AAA+_ATPase"/>
</dbReference>
<dbReference type="InterPro" id="IPR003439">
    <property type="entry name" value="ABC_transporter-like_ATP-bd"/>
</dbReference>
<dbReference type="InterPro" id="IPR017871">
    <property type="entry name" value="ABC_transporter-like_CS"/>
</dbReference>
<dbReference type="InterPro" id="IPR015856">
    <property type="entry name" value="ABC_transpr_CbiO/EcfA_su"/>
</dbReference>
<dbReference type="InterPro" id="IPR050095">
    <property type="entry name" value="ECF_ABC_transporter_ATP-bd"/>
</dbReference>
<dbReference type="InterPro" id="IPR030947">
    <property type="entry name" value="EcfA_1"/>
</dbReference>
<dbReference type="InterPro" id="IPR027417">
    <property type="entry name" value="P-loop_NTPase"/>
</dbReference>
<dbReference type="NCBIfam" id="TIGR04520">
    <property type="entry name" value="ECF_ATPase_1"/>
    <property type="match status" value="1"/>
</dbReference>
<dbReference type="NCBIfam" id="NF010156">
    <property type="entry name" value="PRK13635.1"/>
    <property type="match status" value="1"/>
</dbReference>
<dbReference type="NCBIfam" id="NF010167">
    <property type="entry name" value="PRK13648.1"/>
    <property type="match status" value="1"/>
</dbReference>
<dbReference type="PANTHER" id="PTHR43553:SF24">
    <property type="entry name" value="ENERGY-COUPLING FACTOR TRANSPORTER ATP-BINDING PROTEIN ECFA1"/>
    <property type="match status" value="1"/>
</dbReference>
<dbReference type="PANTHER" id="PTHR43553">
    <property type="entry name" value="HEAVY METAL TRANSPORTER"/>
    <property type="match status" value="1"/>
</dbReference>
<dbReference type="Pfam" id="PF00005">
    <property type="entry name" value="ABC_tran"/>
    <property type="match status" value="1"/>
</dbReference>
<dbReference type="SMART" id="SM00382">
    <property type="entry name" value="AAA"/>
    <property type="match status" value="1"/>
</dbReference>
<dbReference type="SUPFAM" id="SSF52540">
    <property type="entry name" value="P-loop containing nucleoside triphosphate hydrolases"/>
    <property type="match status" value="1"/>
</dbReference>
<dbReference type="PROSITE" id="PS00211">
    <property type="entry name" value="ABC_TRANSPORTER_1"/>
    <property type="match status" value="1"/>
</dbReference>
<dbReference type="PROSITE" id="PS50893">
    <property type="entry name" value="ABC_TRANSPORTER_2"/>
    <property type="match status" value="1"/>
</dbReference>
<dbReference type="PROSITE" id="PS51246">
    <property type="entry name" value="CBIO"/>
    <property type="match status" value="1"/>
</dbReference>
<gene>
    <name evidence="1" type="primary">ecfA1</name>
    <name type="synonym">cbiO1</name>
    <name type="ordered locus">MGAS10270_Spy1965</name>
</gene>